<feature type="signal peptide" evidence="1">
    <location>
        <begin position="1"/>
        <end position="30"/>
    </location>
</feature>
<feature type="chain" id="PRO_0000428050" description="Pilin">
    <location>
        <begin position="31"/>
        <end position="103"/>
    </location>
</feature>
<feature type="region of interest" description="Disordered" evidence="2">
    <location>
        <begin position="61"/>
        <end position="103"/>
    </location>
</feature>
<feature type="compositionally biased region" description="Basic and acidic residues" evidence="2">
    <location>
        <begin position="61"/>
        <end position="76"/>
    </location>
</feature>
<feature type="compositionally biased region" description="Pro residues" evidence="2">
    <location>
        <begin position="92"/>
        <end position="103"/>
    </location>
</feature>
<reference key="1">
    <citation type="journal article" date="2002" name="J. Bacteriol.">
        <title>Whole-genome comparison of Mycobacterium tuberculosis clinical and laboratory strains.</title>
        <authorList>
            <person name="Fleischmann R.D."/>
            <person name="Alland D."/>
            <person name="Eisen J.A."/>
            <person name="Carpenter L."/>
            <person name="White O."/>
            <person name="Peterson J.D."/>
            <person name="DeBoy R.T."/>
            <person name="Dodson R.J."/>
            <person name="Gwinn M.L."/>
            <person name="Haft D.H."/>
            <person name="Hickey E.K."/>
            <person name="Kolonay J.F."/>
            <person name="Nelson W.C."/>
            <person name="Umayam L.A."/>
            <person name="Ermolaeva M.D."/>
            <person name="Salzberg S.L."/>
            <person name="Delcher A."/>
            <person name="Utterback T.R."/>
            <person name="Weidman J.F."/>
            <person name="Khouri H.M."/>
            <person name="Gill J."/>
            <person name="Mikula A."/>
            <person name="Bishai W."/>
            <person name="Jacobs W.R. Jr."/>
            <person name="Venter J.C."/>
            <person name="Fraser C.M."/>
        </authorList>
    </citation>
    <scope>NUCLEOTIDE SEQUENCE [LARGE SCALE GENOMIC DNA]</scope>
    <source>
        <strain>CDC 1551 / Oshkosh</strain>
    </source>
</reference>
<reference key="2">
    <citation type="journal article" date="2007" name="Proc. Natl. Acad. Sci. U.S.A.">
        <title>Mycobacterium tuberculosis produces pili during human infection.</title>
        <authorList>
            <person name="Alteri C.J."/>
            <person name="Xicohtencatl-Cortes J."/>
            <person name="Hess S."/>
            <person name="Caballero-Olin G."/>
            <person name="Giron J.A."/>
            <person name="Friedman R.L."/>
        </authorList>
    </citation>
    <scope>PROTEIN SEQUENCE OF 90-103</scope>
    <scope>FUNCTION</scope>
    <scope>SUBUNIT</scope>
    <scope>SUBCELLULAR LOCATION</scope>
    <scope>DEVELOPMENTAL STAGE</scope>
    <scope>IDENTIFICATION BY MASS SPECTROMETRY</scope>
    <source>
        <strain>CDC 1551 / Oshkosh</strain>
    </source>
</reference>
<keyword id="KW-0130">Cell adhesion</keyword>
<keyword id="KW-0903">Direct protein sequencing</keyword>
<keyword id="KW-0281">Fimbrium</keyword>
<keyword id="KW-1185">Reference proteome</keyword>
<keyword id="KW-0732">Signal</keyword>
<keyword id="KW-0843">Virulence</keyword>
<name>PILIN_MYCTO</name>
<dbReference type="EMBL" id="AE000516">
    <property type="protein sequence ID" value="AAK47756.1"/>
    <property type="status" value="ALT_INIT"/>
    <property type="molecule type" value="Genomic_DNA"/>
</dbReference>
<dbReference type="RefSeq" id="WP_003417257.1">
    <property type="nucleotide sequence ID" value="NZ_KK341227.1"/>
</dbReference>
<dbReference type="GeneID" id="45427312"/>
<dbReference type="KEGG" id="mtc:MT3413"/>
<dbReference type="PATRIC" id="fig|83331.31.peg.3672"/>
<dbReference type="HOGENOM" id="CLU_2260590_0_0_11"/>
<dbReference type="Proteomes" id="UP000001020">
    <property type="component" value="Chromosome"/>
</dbReference>
<dbReference type="GO" id="GO:0009289">
    <property type="term" value="C:pilus"/>
    <property type="evidence" value="ECO:0007669"/>
    <property type="project" value="UniProtKB-SubCell"/>
</dbReference>
<dbReference type="GO" id="GO:0007155">
    <property type="term" value="P:cell adhesion"/>
    <property type="evidence" value="ECO:0007669"/>
    <property type="project" value="UniProtKB-KW"/>
</dbReference>
<sequence>MYRFACRTLMLAACILATGVAGLGVGAQSAAQTAPVPDYYWCPGQPFDPAWGPNWDPYTCHDDFHRDSDGPDHSRDYPGPILEGPVLDDPGAAPPPPAAGGGA</sequence>
<proteinExistence type="evidence at protein level"/>
<accession>P9WI86</accession>
<accession>L0TC61</accession>
<accession>Q6MWY5</accession>
<accession>Q8VJ33</accession>
<comment type="function">
    <text evidence="3">Structural subunit of M.tuberculosis pili (MTP), which are thin (2- to 3-nm wide), flexible, coiled-coil, aggregative fibers. Has a strong affinity for laminin but lacks significant binding affinity for fibronectin or type IV collagen. Mediates adhesion to the extracellular matrix, an event that would facilitate direct interaction with the host epithelium during infection in the lung or other tissues.</text>
</comment>
<comment type="subunit">
    <text evidence="3">Forms a homomer composed of subunits assembled in a large structure.</text>
</comment>
<comment type="subcellular location">
    <subcellularLocation>
        <location evidence="3">Fimbrium</location>
    </subcellularLocation>
    <text>Part of the pili surface structure.</text>
</comment>
<comment type="developmental stage">
    <text evidence="3">Is produced during infection of the human host.</text>
</comment>
<comment type="similarity">
    <text evidence="4">Belongs to the mycobacterial pilin family.</text>
</comment>
<comment type="sequence caution" evidence="4">
    <conflict type="erroneous initiation">
        <sequence resource="EMBL-CDS" id="AAK47756"/>
    </conflict>
</comment>
<gene>
    <name type="primary">mtp</name>
    <name type="ordered locus">MT3413</name>
</gene>
<organism>
    <name type="scientific">Mycobacterium tuberculosis (strain CDC 1551 / Oshkosh)</name>
    <dbReference type="NCBI Taxonomy" id="83331"/>
    <lineage>
        <taxon>Bacteria</taxon>
        <taxon>Bacillati</taxon>
        <taxon>Actinomycetota</taxon>
        <taxon>Actinomycetes</taxon>
        <taxon>Mycobacteriales</taxon>
        <taxon>Mycobacteriaceae</taxon>
        <taxon>Mycobacterium</taxon>
        <taxon>Mycobacterium tuberculosis complex</taxon>
    </lineage>
</organism>
<protein>
    <recommendedName>
        <fullName>Pilin</fullName>
    </recommendedName>
    <alternativeName>
        <fullName>Pili structural subunit</fullName>
    </alternativeName>
</protein>
<evidence type="ECO:0000255" key="1"/>
<evidence type="ECO:0000256" key="2">
    <source>
        <dbReference type="SAM" id="MobiDB-lite"/>
    </source>
</evidence>
<evidence type="ECO:0000269" key="3">
    <source>
    </source>
</evidence>
<evidence type="ECO:0000305" key="4"/>